<organism>
    <name type="scientific">Nitrosococcus oceani (strain ATCC 19707 / BCRC 17464 / JCM 30415 / NCIMB 11848 / C-107)</name>
    <dbReference type="NCBI Taxonomy" id="323261"/>
    <lineage>
        <taxon>Bacteria</taxon>
        <taxon>Pseudomonadati</taxon>
        <taxon>Pseudomonadota</taxon>
        <taxon>Gammaproteobacteria</taxon>
        <taxon>Chromatiales</taxon>
        <taxon>Chromatiaceae</taxon>
        <taxon>Nitrosococcus</taxon>
    </lineage>
</organism>
<dbReference type="EC" id="5.3.1.24" evidence="1"/>
<dbReference type="EMBL" id="CP000127">
    <property type="protein sequence ID" value="ABA57527.1"/>
    <property type="molecule type" value="Genomic_DNA"/>
</dbReference>
<dbReference type="RefSeq" id="WP_002811444.1">
    <property type="nucleotide sequence ID" value="NC_007484.1"/>
</dbReference>
<dbReference type="SMR" id="Q3JCB9"/>
<dbReference type="STRING" id="323261.Noc_1019"/>
<dbReference type="KEGG" id="noc:Noc_1019"/>
<dbReference type="eggNOG" id="COG0135">
    <property type="taxonomic scope" value="Bacteria"/>
</dbReference>
<dbReference type="HOGENOM" id="CLU_076364_2_0_6"/>
<dbReference type="InParanoid" id="Q3JCB9"/>
<dbReference type="UniPathway" id="UPA00035">
    <property type="reaction ID" value="UER00042"/>
</dbReference>
<dbReference type="Proteomes" id="UP000006838">
    <property type="component" value="Chromosome"/>
</dbReference>
<dbReference type="GO" id="GO:0004640">
    <property type="term" value="F:phosphoribosylanthranilate isomerase activity"/>
    <property type="evidence" value="ECO:0007669"/>
    <property type="project" value="UniProtKB-UniRule"/>
</dbReference>
<dbReference type="GO" id="GO:0000162">
    <property type="term" value="P:L-tryptophan biosynthetic process"/>
    <property type="evidence" value="ECO:0007669"/>
    <property type="project" value="UniProtKB-UniRule"/>
</dbReference>
<dbReference type="CDD" id="cd00405">
    <property type="entry name" value="PRAI"/>
    <property type="match status" value="1"/>
</dbReference>
<dbReference type="FunFam" id="3.20.20.70:FF:000075">
    <property type="entry name" value="Tryptophan biosynthesis protein TRP1"/>
    <property type="match status" value="1"/>
</dbReference>
<dbReference type="Gene3D" id="3.20.20.70">
    <property type="entry name" value="Aldolase class I"/>
    <property type="match status" value="1"/>
</dbReference>
<dbReference type="HAMAP" id="MF_00135">
    <property type="entry name" value="PRAI"/>
    <property type="match status" value="1"/>
</dbReference>
<dbReference type="InterPro" id="IPR013785">
    <property type="entry name" value="Aldolase_TIM"/>
</dbReference>
<dbReference type="InterPro" id="IPR001240">
    <property type="entry name" value="PRAI_dom"/>
</dbReference>
<dbReference type="InterPro" id="IPR011060">
    <property type="entry name" value="RibuloseP-bd_barrel"/>
</dbReference>
<dbReference type="InterPro" id="IPR044643">
    <property type="entry name" value="TrpF_fam"/>
</dbReference>
<dbReference type="NCBIfam" id="NF002298">
    <property type="entry name" value="PRK01222.1-4"/>
    <property type="match status" value="1"/>
</dbReference>
<dbReference type="NCBIfam" id="NF002299">
    <property type="entry name" value="PRK01222.1-6"/>
    <property type="match status" value="1"/>
</dbReference>
<dbReference type="PANTHER" id="PTHR42894">
    <property type="entry name" value="N-(5'-PHOSPHORIBOSYL)ANTHRANILATE ISOMERASE"/>
    <property type="match status" value="1"/>
</dbReference>
<dbReference type="PANTHER" id="PTHR42894:SF1">
    <property type="entry name" value="N-(5'-PHOSPHORIBOSYL)ANTHRANILATE ISOMERASE"/>
    <property type="match status" value="1"/>
</dbReference>
<dbReference type="Pfam" id="PF00697">
    <property type="entry name" value="PRAI"/>
    <property type="match status" value="1"/>
</dbReference>
<dbReference type="SUPFAM" id="SSF51366">
    <property type="entry name" value="Ribulose-phoshate binding barrel"/>
    <property type="match status" value="1"/>
</dbReference>
<comment type="catalytic activity">
    <reaction evidence="1">
        <text>N-(5-phospho-beta-D-ribosyl)anthranilate = 1-(2-carboxyphenylamino)-1-deoxy-D-ribulose 5-phosphate</text>
        <dbReference type="Rhea" id="RHEA:21540"/>
        <dbReference type="ChEBI" id="CHEBI:18277"/>
        <dbReference type="ChEBI" id="CHEBI:58613"/>
        <dbReference type="EC" id="5.3.1.24"/>
    </reaction>
</comment>
<comment type="pathway">
    <text evidence="1">Amino-acid biosynthesis; L-tryptophan biosynthesis; L-tryptophan from chorismate: step 3/5.</text>
</comment>
<comment type="similarity">
    <text evidence="1">Belongs to the TrpF family.</text>
</comment>
<name>TRPF_NITOC</name>
<sequence>MRTRVKFCGITRREDAIQAIRLGADAIGLVFYPESPRAVSPQQAYQIVRELPPFVTVVGLFVNAASCYLQQILDKVPIDILQFHGEESPEECGYYGRSYIKAIRMAEGVDLPSLARSYESASALLLDAYQAGVPGGTGRAFDWRRIPKNFSKAVILAGGLTPENIAQAVRQVRPYAVDVSGGVERIKGVKDAAKMAAFMRGVDSVN</sequence>
<evidence type="ECO:0000255" key="1">
    <source>
        <dbReference type="HAMAP-Rule" id="MF_00135"/>
    </source>
</evidence>
<proteinExistence type="inferred from homology"/>
<gene>
    <name evidence="1" type="primary">trpF</name>
    <name type="ordered locus">Noc_1019</name>
</gene>
<reference key="1">
    <citation type="journal article" date="2006" name="Appl. Environ. Microbiol.">
        <title>Complete genome sequence of the marine, chemolithoautotrophic, ammonia-oxidizing bacterium Nitrosococcus oceani ATCC 19707.</title>
        <authorList>
            <person name="Klotz M.G."/>
            <person name="Arp D.J."/>
            <person name="Chain P.S.G."/>
            <person name="El-Sheikh A.F."/>
            <person name="Hauser L.J."/>
            <person name="Hommes N.G."/>
            <person name="Larimer F.W."/>
            <person name="Malfatti S.A."/>
            <person name="Norton J.M."/>
            <person name="Poret-Peterson A.T."/>
            <person name="Vergez L.M."/>
            <person name="Ward B.B."/>
        </authorList>
    </citation>
    <scope>NUCLEOTIDE SEQUENCE [LARGE SCALE GENOMIC DNA]</scope>
    <source>
        <strain>ATCC 19707 / BCRC 17464 / JCM 30415 / NCIMB 11848 / C-107</strain>
    </source>
</reference>
<keyword id="KW-0028">Amino-acid biosynthesis</keyword>
<keyword id="KW-0057">Aromatic amino acid biosynthesis</keyword>
<keyword id="KW-0413">Isomerase</keyword>
<keyword id="KW-1185">Reference proteome</keyword>
<keyword id="KW-0822">Tryptophan biosynthesis</keyword>
<feature type="chain" id="PRO_1000197113" description="N-(5'-phosphoribosyl)anthranilate isomerase">
    <location>
        <begin position="1"/>
        <end position="206"/>
    </location>
</feature>
<protein>
    <recommendedName>
        <fullName evidence="1">N-(5'-phosphoribosyl)anthranilate isomerase</fullName>
        <shortName evidence="1">PRAI</shortName>
        <ecNumber evidence="1">5.3.1.24</ecNumber>
    </recommendedName>
</protein>
<accession>Q3JCB9</accession>